<gene>
    <name evidence="1" type="primary">purQ</name>
    <name type="ordered locus">BH09730</name>
</gene>
<keyword id="KW-0067">ATP-binding</keyword>
<keyword id="KW-0963">Cytoplasm</keyword>
<keyword id="KW-0315">Glutamine amidotransferase</keyword>
<keyword id="KW-0378">Hydrolase</keyword>
<keyword id="KW-0436">Ligase</keyword>
<keyword id="KW-0547">Nucleotide-binding</keyword>
<keyword id="KW-0658">Purine biosynthesis</keyword>
<protein>
    <recommendedName>
        <fullName evidence="1">Phosphoribosylformylglycinamidine synthase subunit PurQ</fullName>
        <shortName evidence="1">FGAM synthase</shortName>
        <ecNumber evidence="1">6.3.5.3</ecNumber>
    </recommendedName>
    <alternativeName>
        <fullName evidence="1">Formylglycinamide ribonucleotide amidotransferase subunit I</fullName>
        <shortName evidence="1">FGAR amidotransferase I</shortName>
        <shortName evidence="1">FGAR-AT I</shortName>
    </alternativeName>
    <alternativeName>
        <fullName evidence="1">Glutaminase PurQ</fullName>
        <ecNumber evidence="1">3.5.1.2</ecNumber>
    </alternativeName>
    <alternativeName>
        <fullName evidence="1">Phosphoribosylformylglycinamidine synthase subunit I</fullName>
    </alternativeName>
</protein>
<reference key="1">
    <citation type="journal article" date="2004" name="Proc. Natl. Acad. Sci. U.S.A.">
        <title>The louse-borne human pathogen Bartonella quintana is a genomic derivative of the zoonotic agent Bartonella henselae.</title>
        <authorList>
            <person name="Alsmark U.C.M."/>
            <person name="Frank A.C."/>
            <person name="Karlberg E.O."/>
            <person name="Legault B.-A."/>
            <person name="Ardell D.H."/>
            <person name="Canbaeck B."/>
            <person name="Eriksson A.-S."/>
            <person name="Naeslund A.K."/>
            <person name="Handley S.A."/>
            <person name="Huvet M."/>
            <person name="La Scola B."/>
            <person name="Holmberg M."/>
            <person name="Andersson S.G.E."/>
        </authorList>
    </citation>
    <scope>NUCLEOTIDE SEQUENCE [LARGE SCALE GENOMIC DNA]</scope>
    <source>
        <strain>ATCC 49882 / DSM 28221 / CCUG 30454 / Houston 1</strain>
    </source>
</reference>
<dbReference type="EC" id="6.3.5.3" evidence="1"/>
<dbReference type="EC" id="3.5.1.2" evidence="1"/>
<dbReference type="EMBL" id="BX897699">
    <property type="protein sequence ID" value="CAF27766.1"/>
    <property type="molecule type" value="Genomic_DNA"/>
</dbReference>
<dbReference type="RefSeq" id="WP_011180844.1">
    <property type="nucleotide sequence ID" value="NZ_LRIJ02000001.1"/>
</dbReference>
<dbReference type="SMR" id="Q6G336"/>
<dbReference type="PaxDb" id="283166-BH09730"/>
<dbReference type="EnsemblBacteria" id="CAF27766">
    <property type="protein sequence ID" value="CAF27766"/>
    <property type="gene ID" value="BH09730"/>
</dbReference>
<dbReference type="GeneID" id="92985336"/>
<dbReference type="KEGG" id="bhe:BH09730"/>
<dbReference type="eggNOG" id="COG0047">
    <property type="taxonomic scope" value="Bacteria"/>
</dbReference>
<dbReference type="OrthoDB" id="9804441at2"/>
<dbReference type="UniPathway" id="UPA00074">
    <property type="reaction ID" value="UER00128"/>
</dbReference>
<dbReference type="Proteomes" id="UP000000421">
    <property type="component" value="Chromosome"/>
</dbReference>
<dbReference type="GO" id="GO:0005737">
    <property type="term" value="C:cytoplasm"/>
    <property type="evidence" value="ECO:0007669"/>
    <property type="project" value="UniProtKB-SubCell"/>
</dbReference>
<dbReference type="GO" id="GO:0005524">
    <property type="term" value="F:ATP binding"/>
    <property type="evidence" value="ECO:0007669"/>
    <property type="project" value="UniProtKB-KW"/>
</dbReference>
<dbReference type="GO" id="GO:0004359">
    <property type="term" value="F:glutaminase activity"/>
    <property type="evidence" value="ECO:0007669"/>
    <property type="project" value="UniProtKB-EC"/>
</dbReference>
<dbReference type="GO" id="GO:0004642">
    <property type="term" value="F:phosphoribosylformylglycinamidine synthase activity"/>
    <property type="evidence" value="ECO:0007669"/>
    <property type="project" value="UniProtKB-UniRule"/>
</dbReference>
<dbReference type="GO" id="GO:0006189">
    <property type="term" value="P:'de novo' IMP biosynthetic process"/>
    <property type="evidence" value="ECO:0007669"/>
    <property type="project" value="UniProtKB-UniRule"/>
</dbReference>
<dbReference type="CDD" id="cd01740">
    <property type="entry name" value="GATase1_FGAR_AT"/>
    <property type="match status" value="1"/>
</dbReference>
<dbReference type="Gene3D" id="3.40.50.880">
    <property type="match status" value="1"/>
</dbReference>
<dbReference type="HAMAP" id="MF_00421">
    <property type="entry name" value="PurQ"/>
    <property type="match status" value="1"/>
</dbReference>
<dbReference type="InterPro" id="IPR029062">
    <property type="entry name" value="Class_I_gatase-like"/>
</dbReference>
<dbReference type="InterPro" id="IPR010075">
    <property type="entry name" value="PRibForGlyAmidine_synth_PurQ"/>
</dbReference>
<dbReference type="NCBIfam" id="TIGR01737">
    <property type="entry name" value="FGAM_synth_I"/>
    <property type="match status" value="1"/>
</dbReference>
<dbReference type="NCBIfam" id="NF002957">
    <property type="entry name" value="PRK03619.1"/>
    <property type="match status" value="1"/>
</dbReference>
<dbReference type="PANTHER" id="PTHR47552">
    <property type="entry name" value="PHOSPHORIBOSYLFORMYLGLYCINAMIDINE SYNTHASE SUBUNIT PURQ"/>
    <property type="match status" value="1"/>
</dbReference>
<dbReference type="PANTHER" id="PTHR47552:SF1">
    <property type="entry name" value="PHOSPHORIBOSYLFORMYLGLYCINAMIDINE SYNTHASE SUBUNIT PURQ"/>
    <property type="match status" value="1"/>
</dbReference>
<dbReference type="Pfam" id="PF13507">
    <property type="entry name" value="GATase_5"/>
    <property type="match status" value="1"/>
</dbReference>
<dbReference type="PIRSF" id="PIRSF001586">
    <property type="entry name" value="FGAM_synth_I"/>
    <property type="match status" value="1"/>
</dbReference>
<dbReference type="SMART" id="SM01211">
    <property type="entry name" value="GATase_5"/>
    <property type="match status" value="1"/>
</dbReference>
<dbReference type="SUPFAM" id="SSF52317">
    <property type="entry name" value="Class I glutamine amidotransferase-like"/>
    <property type="match status" value="1"/>
</dbReference>
<dbReference type="PROSITE" id="PS51273">
    <property type="entry name" value="GATASE_TYPE_1"/>
    <property type="match status" value="1"/>
</dbReference>
<sequence>MKTAIIQLPGLNRDRDMVAALHHITGVEPLKIWQTESTIPDVDVIVIPGGFSYGDYLRCGAIGARTPVLQAVREKAQKGVTVIGICNGFQILLEAGLLPGTLMRNTSLKFVCREIKLEVVNVNTKFSRYYSKGQIICCPVAHHDGNYFVDSETLKQMEENEQIIFRYAENTNPNGSVNDIAGIINKAGNILGMMPHPENFIEPAHGGTDGRLFFQSALELAKG</sequence>
<proteinExistence type="inferred from homology"/>
<name>PURQ_BARHE</name>
<organism>
    <name type="scientific">Bartonella henselae (strain ATCC 49882 / DSM 28221 / CCUG 30454 / Houston 1)</name>
    <name type="common">Rochalimaea henselae</name>
    <dbReference type="NCBI Taxonomy" id="283166"/>
    <lineage>
        <taxon>Bacteria</taxon>
        <taxon>Pseudomonadati</taxon>
        <taxon>Pseudomonadota</taxon>
        <taxon>Alphaproteobacteria</taxon>
        <taxon>Hyphomicrobiales</taxon>
        <taxon>Bartonellaceae</taxon>
        <taxon>Bartonella</taxon>
    </lineage>
</organism>
<feature type="chain" id="PRO_0000100540" description="Phosphoribosylformylglycinamidine synthase subunit PurQ">
    <location>
        <begin position="1"/>
        <end position="223"/>
    </location>
</feature>
<feature type="domain" description="Glutamine amidotransferase type-1" evidence="1">
    <location>
        <begin position="2"/>
        <end position="223"/>
    </location>
</feature>
<feature type="active site" description="Nucleophile" evidence="1">
    <location>
        <position position="86"/>
    </location>
</feature>
<feature type="active site" evidence="1">
    <location>
        <position position="196"/>
    </location>
</feature>
<feature type="active site" evidence="1">
    <location>
        <position position="198"/>
    </location>
</feature>
<accession>Q6G336</accession>
<evidence type="ECO:0000255" key="1">
    <source>
        <dbReference type="HAMAP-Rule" id="MF_00421"/>
    </source>
</evidence>
<comment type="function">
    <text evidence="1">Part of the phosphoribosylformylglycinamidine synthase complex involved in the purines biosynthetic pathway. Catalyzes the ATP-dependent conversion of formylglycinamide ribonucleotide (FGAR) and glutamine to yield formylglycinamidine ribonucleotide (FGAM) and glutamate. The FGAM synthase complex is composed of three subunits. PurQ produces an ammonia molecule by converting glutamine to glutamate. PurL transfers the ammonia molecule to FGAR to form FGAM in an ATP-dependent manner. PurS interacts with PurQ and PurL and is thought to assist in the transfer of the ammonia molecule from PurQ to PurL.</text>
</comment>
<comment type="catalytic activity">
    <reaction evidence="1">
        <text>N(2)-formyl-N(1)-(5-phospho-beta-D-ribosyl)glycinamide + L-glutamine + ATP + H2O = 2-formamido-N(1)-(5-O-phospho-beta-D-ribosyl)acetamidine + L-glutamate + ADP + phosphate + H(+)</text>
        <dbReference type="Rhea" id="RHEA:17129"/>
        <dbReference type="ChEBI" id="CHEBI:15377"/>
        <dbReference type="ChEBI" id="CHEBI:15378"/>
        <dbReference type="ChEBI" id="CHEBI:29985"/>
        <dbReference type="ChEBI" id="CHEBI:30616"/>
        <dbReference type="ChEBI" id="CHEBI:43474"/>
        <dbReference type="ChEBI" id="CHEBI:58359"/>
        <dbReference type="ChEBI" id="CHEBI:147286"/>
        <dbReference type="ChEBI" id="CHEBI:147287"/>
        <dbReference type="ChEBI" id="CHEBI:456216"/>
        <dbReference type="EC" id="6.3.5.3"/>
    </reaction>
</comment>
<comment type="catalytic activity">
    <reaction evidence="1">
        <text>L-glutamine + H2O = L-glutamate + NH4(+)</text>
        <dbReference type="Rhea" id="RHEA:15889"/>
        <dbReference type="ChEBI" id="CHEBI:15377"/>
        <dbReference type="ChEBI" id="CHEBI:28938"/>
        <dbReference type="ChEBI" id="CHEBI:29985"/>
        <dbReference type="ChEBI" id="CHEBI:58359"/>
        <dbReference type="EC" id="3.5.1.2"/>
    </reaction>
</comment>
<comment type="pathway">
    <text evidence="1">Purine metabolism; IMP biosynthesis via de novo pathway; 5-amino-1-(5-phospho-D-ribosyl)imidazole from N(2)-formyl-N(1)-(5-phospho-D-ribosyl)glycinamide: step 1/2.</text>
</comment>
<comment type="subunit">
    <text evidence="1">Part of the FGAM synthase complex composed of 1 PurL, 1 PurQ and 2 PurS subunits.</text>
</comment>
<comment type="subcellular location">
    <subcellularLocation>
        <location evidence="1">Cytoplasm</location>
    </subcellularLocation>
</comment>